<proteinExistence type="predicted"/>
<name>ANI3_CAEEL</name>
<gene>
    <name type="primary">ani-3</name>
    <name type="ORF">Y43F8C.14</name>
</gene>
<organism>
    <name type="scientific">Caenorhabditis elegans</name>
    <dbReference type="NCBI Taxonomy" id="6239"/>
    <lineage>
        <taxon>Eukaryota</taxon>
        <taxon>Metazoa</taxon>
        <taxon>Ecdysozoa</taxon>
        <taxon>Nematoda</taxon>
        <taxon>Chromadorea</taxon>
        <taxon>Rhabditida</taxon>
        <taxon>Rhabditina</taxon>
        <taxon>Rhabditomorpha</taxon>
        <taxon>Rhabditoidea</taxon>
        <taxon>Rhabditidae</taxon>
        <taxon>Peloderinae</taxon>
        <taxon>Caenorhabditis</taxon>
    </lineage>
</organism>
<evidence type="ECO:0000255" key="1">
    <source>
        <dbReference type="PROSITE-ProRule" id="PRU00145"/>
    </source>
</evidence>
<sequence length="709" mass="80140">MENFDGKSMPPTPVPIGSSQFYRWMPHPIVDTPPSDATWRKPVPRGRIRDLVAAFDQCSGMLEQKPPPPPTQRVESLENEHIAPPPTSKSSKIPEILAKKSEKYISPYEKRHFHGRRGTQAVVFNSNNAQNAPNVGGAYPYGATPLKLRNLAQKMDKEELYVADDVGISKKSENFENSDDDVANFQELLVLDEVLENAENSENLESQQYDEESTLNRTFQDSGVPENQENLLQLPECPKTPKFTSSPTLFTPYAAGEPIVEYRCSSGSAGGPLKIVVKKLQAPIALATSTPKPAMCRPPKHSEPPPAFQDSFVSSISNWSAVDHHATDSRRQMNRLLNSIDETRHHILLAEHSLLEAQKSKCPMQELASQRVLLICRERLKVQLEEVRRLQAMTVVRHPPPPINRHFKSTMVISNISLQFNKHFHSRGSYAFLVLLKCRTEVEATGVVTLLAQFQTPQNFILFGEHLRFSNLPVDFTIGMEIYMMRVPEHRPPEKTCAAFLAQKVRNLLVPSNAAHRRPTTSTPQKSIQNATSPACDFQLCGNLTLDRDSSGDNRRFYLDDVIYPLEGTVKLNSHCTSLPDAIDMEYRGFLHILHDSASPLERAKKVPIWHKYWSLLHRGAILFWSTPQEEVHEKVPIFQIDLTKCTNNSIEESREMSQGAEHEFHIELLIDQDPDLIEKRRVILAAESSDHLNSWLSAINDTLDILRS</sequence>
<reference key="1">
    <citation type="journal article" date="1998" name="Science">
        <title>Genome sequence of the nematode C. elegans: a platform for investigating biology.</title>
        <authorList>
            <consortium name="The C. elegans sequencing consortium"/>
        </authorList>
    </citation>
    <scope>NUCLEOTIDE SEQUENCE [LARGE SCALE GENOMIC DNA]</scope>
    <source>
        <strain>Bristol N2</strain>
    </source>
</reference>
<protein>
    <recommendedName>
        <fullName>Anillin-like protein 3</fullName>
    </recommendedName>
</protein>
<dbReference type="EMBL" id="AL032637">
    <property type="protein sequence ID" value="CAA21615.1"/>
    <property type="molecule type" value="Genomic_DNA"/>
</dbReference>
<dbReference type="PIR" id="T26874">
    <property type="entry name" value="T26874"/>
</dbReference>
<dbReference type="RefSeq" id="NP_507814.1">
    <property type="nucleotide sequence ID" value="NM_075413.5"/>
</dbReference>
<dbReference type="SMR" id="Q9XWN6"/>
<dbReference type="BioGRID" id="45253">
    <property type="interactions" value="8"/>
</dbReference>
<dbReference type="DIP" id="DIP-26799N"/>
<dbReference type="FunCoup" id="Q9XWN6">
    <property type="interactions" value="951"/>
</dbReference>
<dbReference type="IntAct" id="Q9XWN6">
    <property type="interactions" value="2"/>
</dbReference>
<dbReference type="STRING" id="6239.Y43F8C.14.1"/>
<dbReference type="PaxDb" id="6239-Y43F8C.14"/>
<dbReference type="PeptideAtlas" id="Q9XWN6"/>
<dbReference type="EnsemblMetazoa" id="Y43F8C.14.1">
    <property type="protein sequence ID" value="Y43F8C.14.1"/>
    <property type="gene ID" value="WBGene00012835"/>
</dbReference>
<dbReference type="GeneID" id="180291"/>
<dbReference type="KEGG" id="cel:CELE_Y43F8C.14"/>
<dbReference type="UCSC" id="Y43F8C.14">
    <property type="organism name" value="c. elegans"/>
</dbReference>
<dbReference type="AGR" id="WB:WBGene00012835"/>
<dbReference type="CTD" id="180291"/>
<dbReference type="WormBase" id="Y43F8C.14">
    <property type="protein sequence ID" value="CE21912"/>
    <property type="gene ID" value="WBGene00012835"/>
    <property type="gene designation" value="ani-3"/>
</dbReference>
<dbReference type="eggNOG" id="KOG3640">
    <property type="taxonomic scope" value="Eukaryota"/>
</dbReference>
<dbReference type="GeneTree" id="ENSGT00390000008749"/>
<dbReference type="HOGENOM" id="CLU_370567_0_0_1"/>
<dbReference type="InParanoid" id="Q9XWN6"/>
<dbReference type="OMA" id="HANDSRR"/>
<dbReference type="OrthoDB" id="5915976at2759"/>
<dbReference type="PhylomeDB" id="Q9XWN6"/>
<dbReference type="PRO" id="PR:Q9XWN6"/>
<dbReference type="Proteomes" id="UP000001940">
    <property type="component" value="Chromosome V"/>
</dbReference>
<dbReference type="Bgee" id="WBGene00012835">
    <property type="expression patterns" value="Expressed in germ line (C elegans) and 4 other cell types or tissues"/>
</dbReference>
<dbReference type="GO" id="GO:0005826">
    <property type="term" value="C:actomyosin contractile ring"/>
    <property type="evidence" value="ECO:0000318"/>
    <property type="project" value="GO_Central"/>
</dbReference>
<dbReference type="GO" id="GO:0000915">
    <property type="term" value="P:actomyosin contractile ring assembly"/>
    <property type="evidence" value="ECO:0000318"/>
    <property type="project" value="GO_Central"/>
</dbReference>
<dbReference type="GO" id="GO:0000281">
    <property type="term" value="P:mitotic cytokinesis"/>
    <property type="evidence" value="ECO:0000318"/>
    <property type="project" value="GO_Central"/>
</dbReference>
<dbReference type="GO" id="GO:0031106">
    <property type="term" value="P:septin ring organization"/>
    <property type="evidence" value="ECO:0000318"/>
    <property type="project" value="GO_Central"/>
</dbReference>
<dbReference type="CDD" id="cd01263">
    <property type="entry name" value="PH_anillin"/>
    <property type="match status" value="1"/>
</dbReference>
<dbReference type="Gene3D" id="2.30.29.30">
    <property type="entry name" value="Pleckstrin-homology domain (PH domain)/Phosphotyrosine-binding domain (PTB)"/>
    <property type="match status" value="1"/>
</dbReference>
<dbReference type="InterPro" id="IPR012966">
    <property type="entry name" value="AHD"/>
</dbReference>
<dbReference type="InterPro" id="IPR051364">
    <property type="entry name" value="Cytokinesis/Rho-signaling"/>
</dbReference>
<dbReference type="InterPro" id="IPR011993">
    <property type="entry name" value="PH-like_dom_sf"/>
</dbReference>
<dbReference type="InterPro" id="IPR037840">
    <property type="entry name" value="PH_Anillin"/>
</dbReference>
<dbReference type="InterPro" id="IPR001849">
    <property type="entry name" value="PH_domain"/>
</dbReference>
<dbReference type="PANTHER" id="PTHR21538:SF23">
    <property type="entry name" value="ANILLIN"/>
    <property type="match status" value="1"/>
</dbReference>
<dbReference type="PANTHER" id="PTHR21538">
    <property type="entry name" value="ANILLIN/RHOTEKIN RTKN"/>
    <property type="match status" value="1"/>
</dbReference>
<dbReference type="Pfam" id="PF08174">
    <property type="entry name" value="Anillin"/>
    <property type="match status" value="1"/>
</dbReference>
<dbReference type="Pfam" id="PF00169">
    <property type="entry name" value="PH"/>
    <property type="match status" value="1"/>
</dbReference>
<dbReference type="SMART" id="SM00233">
    <property type="entry name" value="PH"/>
    <property type="match status" value="1"/>
</dbReference>
<dbReference type="SUPFAM" id="SSF50729">
    <property type="entry name" value="PH domain-like"/>
    <property type="match status" value="1"/>
</dbReference>
<dbReference type="PROSITE" id="PS50003">
    <property type="entry name" value="PH_DOMAIN"/>
    <property type="match status" value="1"/>
</dbReference>
<accession>Q9XWN6</accession>
<keyword id="KW-1185">Reference proteome</keyword>
<feature type="chain" id="PRO_0000227971" description="Anillin-like protein 3">
    <location>
        <begin position="1"/>
        <end position="709"/>
    </location>
</feature>
<feature type="domain" description="PH" evidence="1">
    <location>
        <begin position="584"/>
        <end position="705"/>
    </location>
</feature>